<protein>
    <recommendedName>
        <fullName>Redox-sensitive transcriptional activator SoxR</fullName>
    </recommendedName>
</protein>
<sequence length="152" mass="16875">MEKKSPRLKALLTPGEVAKRSGVAVSALHFYESKGLITSIRNSGNQRRYKRDVLRYVAIIKIAQRIGIPLATIGDAFGILPEGHTLSAKEWKQLSSQWREELDRRIHTLVALRDELDGCIGCGCLSRSDCPLRNPGDRLGEHGTGARLLEDD</sequence>
<reference key="1">
    <citation type="submission" date="1996-06" db="EMBL/GenBank/DDBJ databases">
        <authorList>
            <person name="Martins E.A.L."/>
            <person name="Demple B."/>
        </authorList>
    </citation>
    <scope>NUCLEOTIDE SEQUENCE [GENOMIC DNA]</scope>
    <source>
        <strain>LT2</strain>
    </source>
</reference>
<reference key="2">
    <citation type="journal article" date="2001" name="Nature">
        <title>Complete genome sequence of Salmonella enterica serovar Typhimurium LT2.</title>
        <authorList>
            <person name="McClelland M."/>
            <person name="Sanderson K.E."/>
            <person name="Spieth J."/>
            <person name="Clifton S.W."/>
            <person name="Latreille P."/>
            <person name="Courtney L."/>
            <person name="Porwollik S."/>
            <person name="Ali J."/>
            <person name="Dante M."/>
            <person name="Du F."/>
            <person name="Hou S."/>
            <person name="Layman D."/>
            <person name="Leonard S."/>
            <person name="Nguyen C."/>
            <person name="Scott K."/>
            <person name="Holmes A."/>
            <person name="Grewal N."/>
            <person name="Mulvaney E."/>
            <person name="Ryan E."/>
            <person name="Sun H."/>
            <person name="Florea L."/>
            <person name="Miller W."/>
            <person name="Stoneking T."/>
            <person name="Nhan M."/>
            <person name="Waterston R."/>
            <person name="Wilson R.K."/>
        </authorList>
    </citation>
    <scope>NUCLEOTIDE SEQUENCE [LARGE SCALE GENOMIC DNA]</scope>
    <source>
        <strain>LT2 / SGSC1412 / ATCC 700720</strain>
    </source>
</reference>
<accession>P0A2R0</accession>
<accession>Q56144</accession>
<evidence type="ECO:0000250" key="1"/>
<evidence type="ECO:0000255" key="2">
    <source>
        <dbReference type="PROSITE-ProRule" id="PRU00254"/>
    </source>
</evidence>
<evidence type="ECO:0000305" key="3"/>
<comment type="function">
    <text evidence="1">Activates the transcription of the soxS gene which itself controls the superoxide response regulon. SoxR contains a 2Fe-2S iron-sulfur cluster that may act as a redox sensor system that recognizes superoxide. The variable redox state of the Fe-S cluster is employed in vivo to modulate the transcriptional activity of SoxR in response to specific types of oxidative stress (By similarity).</text>
</comment>
<comment type="subunit">
    <text evidence="1">Homodimer.</text>
</comment>
<keyword id="KW-0001">2Fe-2S</keyword>
<keyword id="KW-0010">Activator</keyword>
<keyword id="KW-0238">DNA-binding</keyword>
<keyword id="KW-0408">Iron</keyword>
<keyword id="KW-0411">Iron-sulfur</keyword>
<keyword id="KW-0479">Metal-binding</keyword>
<keyword id="KW-1185">Reference proteome</keyword>
<keyword id="KW-0804">Transcription</keyword>
<keyword id="KW-0805">Transcription regulation</keyword>
<dbReference type="EMBL" id="U61147">
    <property type="protein sequence ID" value="AAB03869.1"/>
    <property type="molecule type" value="Genomic_DNA"/>
</dbReference>
<dbReference type="EMBL" id="AE006468">
    <property type="protein sequence ID" value="AAL23090.1"/>
    <property type="molecule type" value="Genomic_DNA"/>
</dbReference>
<dbReference type="RefSeq" id="NP_463131.1">
    <property type="nucleotide sequence ID" value="NC_003197.2"/>
</dbReference>
<dbReference type="RefSeq" id="WP_000412686.1">
    <property type="nucleotide sequence ID" value="NC_003197.2"/>
</dbReference>
<dbReference type="SMR" id="P0A2R0"/>
<dbReference type="STRING" id="99287.STM4266"/>
<dbReference type="PaxDb" id="99287-STM4266"/>
<dbReference type="GeneID" id="1255792"/>
<dbReference type="KEGG" id="stm:STM4266"/>
<dbReference type="PATRIC" id="fig|99287.12.peg.4487"/>
<dbReference type="HOGENOM" id="CLU_060077_5_1_6"/>
<dbReference type="OMA" id="CLSIESC"/>
<dbReference type="PhylomeDB" id="P0A2R0"/>
<dbReference type="BioCyc" id="SENT99287:STM4266-MONOMER"/>
<dbReference type="Proteomes" id="UP000001014">
    <property type="component" value="Chromosome"/>
</dbReference>
<dbReference type="GO" id="GO:0051537">
    <property type="term" value="F:2 iron, 2 sulfur cluster binding"/>
    <property type="evidence" value="ECO:0007669"/>
    <property type="project" value="UniProtKB-KW"/>
</dbReference>
<dbReference type="GO" id="GO:0003677">
    <property type="term" value="F:DNA binding"/>
    <property type="evidence" value="ECO:0007669"/>
    <property type="project" value="UniProtKB-KW"/>
</dbReference>
<dbReference type="GO" id="GO:0003700">
    <property type="term" value="F:DNA-binding transcription factor activity"/>
    <property type="evidence" value="ECO:0000318"/>
    <property type="project" value="GO_Central"/>
</dbReference>
<dbReference type="GO" id="GO:0046872">
    <property type="term" value="F:metal ion binding"/>
    <property type="evidence" value="ECO:0007669"/>
    <property type="project" value="UniProtKB-KW"/>
</dbReference>
<dbReference type="GO" id="GO:0006355">
    <property type="term" value="P:regulation of DNA-templated transcription"/>
    <property type="evidence" value="ECO:0000318"/>
    <property type="project" value="GO_Central"/>
</dbReference>
<dbReference type="GO" id="GO:0006979">
    <property type="term" value="P:response to oxidative stress"/>
    <property type="evidence" value="ECO:0007669"/>
    <property type="project" value="InterPro"/>
</dbReference>
<dbReference type="CDD" id="cd01110">
    <property type="entry name" value="HTH_SoxR"/>
    <property type="match status" value="1"/>
</dbReference>
<dbReference type="FunFam" id="1.10.1660.10:FF:000002">
    <property type="entry name" value="Redox-sensitive transcriptional activator SoxR"/>
    <property type="match status" value="1"/>
</dbReference>
<dbReference type="Gene3D" id="1.10.1660.10">
    <property type="match status" value="1"/>
</dbReference>
<dbReference type="InterPro" id="IPR009061">
    <property type="entry name" value="DNA-bd_dom_put_sf"/>
</dbReference>
<dbReference type="InterPro" id="IPR000551">
    <property type="entry name" value="MerR-type_HTH_dom"/>
</dbReference>
<dbReference type="InterPro" id="IPR047057">
    <property type="entry name" value="MerR_fam"/>
</dbReference>
<dbReference type="InterPro" id="IPR010211">
    <property type="entry name" value="Redox-sen_tscrpt-act_SoxR"/>
</dbReference>
<dbReference type="InterPro" id="IPR015358">
    <property type="entry name" value="Tscrpt_reg_MerR_DNA-bd"/>
</dbReference>
<dbReference type="NCBIfam" id="TIGR01950">
    <property type="entry name" value="SoxR"/>
    <property type="match status" value="1"/>
</dbReference>
<dbReference type="PANTHER" id="PTHR30204">
    <property type="entry name" value="REDOX-CYCLING DRUG-SENSING TRANSCRIPTIONAL ACTIVATOR SOXR"/>
    <property type="match status" value="1"/>
</dbReference>
<dbReference type="PANTHER" id="PTHR30204:SF0">
    <property type="entry name" value="REDOX-SENSITIVE TRANSCRIPTIONAL ACTIVATOR SOXR"/>
    <property type="match status" value="1"/>
</dbReference>
<dbReference type="Pfam" id="PF00376">
    <property type="entry name" value="MerR"/>
    <property type="match status" value="1"/>
</dbReference>
<dbReference type="Pfam" id="PF09278">
    <property type="entry name" value="MerR-DNA-bind"/>
    <property type="match status" value="1"/>
</dbReference>
<dbReference type="PRINTS" id="PR00040">
    <property type="entry name" value="HTHMERR"/>
</dbReference>
<dbReference type="SMART" id="SM00422">
    <property type="entry name" value="HTH_MERR"/>
    <property type="match status" value="1"/>
</dbReference>
<dbReference type="SUPFAM" id="SSF46955">
    <property type="entry name" value="Putative DNA-binding domain"/>
    <property type="match status" value="1"/>
</dbReference>
<dbReference type="PROSITE" id="PS00552">
    <property type="entry name" value="HTH_MERR_1"/>
    <property type="match status" value="1"/>
</dbReference>
<dbReference type="PROSITE" id="PS50937">
    <property type="entry name" value="HTH_MERR_2"/>
    <property type="match status" value="1"/>
</dbReference>
<name>SOXR_SALTY</name>
<feature type="chain" id="PRO_0000098153" description="Redox-sensitive transcriptional activator SoxR">
    <location>
        <begin position="1"/>
        <end position="152"/>
    </location>
</feature>
<feature type="domain" description="HTH merR-type" evidence="2">
    <location>
        <begin position="11"/>
        <end position="79"/>
    </location>
</feature>
<feature type="DNA-binding region" description="H-T-H motif" evidence="2">
    <location>
        <begin position="14"/>
        <end position="33"/>
    </location>
</feature>
<feature type="region of interest" description="Might be part of a sensor region">
    <location>
        <begin position="119"/>
        <end position="130"/>
    </location>
</feature>
<feature type="binding site" evidence="1">
    <location>
        <position position="119"/>
    </location>
    <ligand>
        <name>[2Fe-2S] cluster</name>
        <dbReference type="ChEBI" id="CHEBI:190135"/>
    </ligand>
</feature>
<feature type="binding site" evidence="1">
    <location>
        <position position="122"/>
    </location>
    <ligand>
        <name>[2Fe-2S] cluster</name>
        <dbReference type="ChEBI" id="CHEBI:190135"/>
    </ligand>
</feature>
<feature type="binding site" evidence="1">
    <location>
        <position position="124"/>
    </location>
    <ligand>
        <name>[2Fe-2S] cluster</name>
        <dbReference type="ChEBI" id="CHEBI:190135"/>
    </ligand>
</feature>
<feature type="binding site" evidence="1">
    <location>
        <position position="130"/>
    </location>
    <ligand>
        <name>[2Fe-2S] cluster</name>
        <dbReference type="ChEBI" id="CHEBI:190135"/>
    </ligand>
</feature>
<feature type="sequence conflict" description="In Ref. 1; AAB03869." evidence="3" ref="1">
    <original>A</original>
    <variation>P</variation>
    <location>
        <position position="27"/>
    </location>
</feature>
<proteinExistence type="inferred from homology"/>
<gene>
    <name type="primary">soxR</name>
    <name type="ordered locus">STM4266</name>
</gene>
<organism>
    <name type="scientific">Salmonella typhimurium (strain LT2 / SGSC1412 / ATCC 700720)</name>
    <dbReference type="NCBI Taxonomy" id="99287"/>
    <lineage>
        <taxon>Bacteria</taxon>
        <taxon>Pseudomonadati</taxon>
        <taxon>Pseudomonadota</taxon>
        <taxon>Gammaproteobacteria</taxon>
        <taxon>Enterobacterales</taxon>
        <taxon>Enterobacteriaceae</taxon>
        <taxon>Salmonella</taxon>
    </lineage>
</organism>